<organism>
    <name type="scientific">Zymomonas mobilis subsp. mobilis (strain ATCC 31821 / ZM4 / CP4)</name>
    <dbReference type="NCBI Taxonomy" id="264203"/>
    <lineage>
        <taxon>Bacteria</taxon>
        <taxon>Pseudomonadati</taxon>
        <taxon>Pseudomonadota</taxon>
        <taxon>Alphaproteobacteria</taxon>
        <taxon>Sphingomonadales</taxon>
        <taxon>Zymomonadaceae</taxon>
        <taxon>Zymomonas</taxon>
    </lineage>
</organism>
<protein>
    <recommendedName>
        <fullName>Fructokinase</fullName>
        <ecNumber>2.7.1.4</ecNumber>
    </recommendedName>
</protein>
<accession>Q03417</accession>
<accession>Q5NLR7</accession>
<sequence>MKNDKKIYGCIEGGGTKFMLALIDSDRKMLAVERVPTTTPEETLGKSVEFFKKALPQYADSFASFGIASFGPLCLDRKSPKWGYITNTPKPFWPNTDVVTPFKEAFGCPVEIDTDVNGAALAENFWGASKGTHTSVYVTVGTGFGGGVLIDGKPIHGLAHPEMGHGIPIRHPDDRDFEGCCPYHGGCYEGLASGTAIRKRWGKALNEMEPAEFEKAREIIAFYLAHFNVTLQAFISPERIVFGGGVMHVDGMLASVRRQTAEIANSYFEGADFEKIIVLPGLGDQAGMMGAFALALAAENK</sequence>
<dbReference type="EC" id="2.7.1.4"/>
<dbReference type="EMBL" id="M97296">
    <property type="protein sequence ID" value="AAA27687.1"/>
    <property type="molecule type" value="Genomic_DNA"/>
</dbReference>
<dbReference type="EMBL" id="AE008692">
    <property type="protein sequence ID" value="AAV90343.1"/>
    <property type="molecule type" value="Genomic_DNA"/>
</dbReference>
<dbReference type="PIR" id="A41894">
    <property type="entry name" value="A41894"/>
</dbReference>
<dbReference type="RefSeq" id="WP_011241465.1">
    <property type="nucleotide sequence ID" value="NZ_CP035711.1"/>
</dbReference>
<dbReference type="SMR" id="Q03417"/>
<dbReference type="STRING" id="264203.ZMO1719"/>
<dbReference type="GeneID" id="79904954"/>
<dbReference type="KEGG" id="zmo:ZMO1719"/>
<dbReference type="eggNOG" id="COG1940">
    <property type="taxonomic scope" value="Bacteria"/>
</dbReference>
<dbReference type="HOGENOM" id="CLU_036604_3_0_5"/>
<dbReference type="Proteomes" id="UP000001173">
    <property type="component" value="Chromosome"/>
</dbReference>
<dbReference type="GO" id="GO:0005524">
    <property type="term" value="F:ATP binding"/>
    <property type="evidence" value="ECO:0007669"/>
    <property type="project" value="UniProtKB-KW"/>
</dbReference>
<dbReference type="GO" id="GO:0008865">
    <property type="term" value="F:fructokinase activity"/>
    <property type="evidence" value="ECO:0007669"/>
    <property type="project" value="UniProtKB-EC"/>
</dbReference>
<dbReference type="GO" id="GO:0046872">
    <property type="term" value="F:metal ion binding"/>
    <property type="evidence" value="ECO:0007669"/>
    <property type="project" value="UniProtKB-KW"/>
</dbReference>
<dbReference type="CDD" id="cd24067">
    <property type="entry name" value="ASKHA_NBD_ROK_BsFRK-like"/>
    <property type="match status" value="1"/>
</dbReference>
<dbReference type="FunFam" id="3.30.420.40:FF:000153">
    <property type="entry name" value="Putative fructokinase"/>
    <property type="match status" value="1"/>
</dbReference>
<dbReference type="Gene3D" id="3.30.420.40">
    <property type="match status" value="2"/>
</dbReference>
<dbReference type="InterPro" id="IPR043129">
    <property type="entry name" value="ATPase_NBD"/>
</dbReference>
<dbReference type="InterPro" id="IPR051804">
    <property type="entry name" value="Carb_Metab_Reg_Kinase/Isom"/>
</dbReference>
<dbReference type="InterPro" id="IPR000600">
    <property type="entry name" value="ROK"/>
</dbReference>
<dbReference type="InterPro" id="IPR049874">
    <property type="entry name" value="ROK_cs"/>
</dbReference>
<dbReference type="PANTHER" id="PTHR42742:SF3">
    <property type="entry name" value="FRUCTOKINASE"/>
    <property type="match status" value="1"/>
</dbReference>
<dbReference type="PANTHER" id="PTHR42742">
    <property type="entry name" value="TRANSCRIPTIONAL REPRESSOR MPRA"/>
    <property type="match status" value="1"/>
</dbReference>
<dbReference type="Pfam" id="PF00480">
    <property type="entry name" value="ROK"/>
    <property type="match status" value="1"/>
</dbReference>
<dbReference type="SUPFAM" id="SSF53067">
    <property type="entry name" value="Actin-like ATPase domain"/>
    <property type="match status" value="1"/>
</dbReference>
<dbReference type="PROSITE" id="PS01125">
    <property type="entry name" value="ROK"/>
    <property type="match status" value="1"/>
</dbReference>
<feature type="chain" id="PRO_0000095687" description="Fructokinase">
    <location>
        <begin position="1"/>
        <end position="301"/>
    </location>
</feature>
<feature type="binding site" evidence="1">
    <location>
        <position position="165"/>
    </location>
    <ligand>
        <name>Zn(2+)</name>
        <dbReference type="ChEBI" id="CHEBI:29105"/>
    </ligand>
</feature>
<feature type="binding site" evidence="1">
    <location>
        <position position="181"/>
    </location>
    <ligand>
        <name>Zn(2+)</name>
        <dbReference type="ChEBI" id="CHEBI:29105"/>
    </ligand>
</feature>
<feature type="binding site" evidence="1">
    <location>
        <position position="184"/>
    </location>
    <ligand>
        <name>Zn(2+)</name>
        <dbReference type="ChEBI" id="CHEBI:29105"/>
    </ligand>
</feature>
<feature type="binding site" evidence="1">
    <location>
        <position position="187"/>
    </location>
    <ligand>
        <name>Zn(2+)</name>
        <dbReference type="ChEBI" id="CHEBI:29105"/>
    </ligand>
</feature>
<reference key="1">
    <citation type="journal article" date="1992" name="J. Bacteriol.">
        <title>Cloning, sequencing, and expression of the Zymomonas mobilis fructokinase gene and structural comparison of the enzyme with other hexose kinases.</title>
        <authorList>
            <person name="Zembrzuski B."/>
            <person name="Chilco P."/>
            <person name="Liu X.L."/>
            <person name="Liu J."/>
            <person name="Conway T."/>
            <person name="Scopes R.K."/>
        </authorList>
    </citation>
    <scope>NUCLEOTIDE SEQUENCE [GENOMIC DNA]</scope>
    <source>
        <strain>ATCC 29191 / DSM 3580 / JCM 10190 / CECT 560 / NBRC 13756 / NCIMB 11199 / NRRL B-4490 / ZM6</strain>
    </source>
</reference>
<reference key="2">
    <citation type="journal article" date="2005" name="Nat. Biotechnol.">
        <title>The genome sequence of the ethanologenic bacterium Zymomonas mobilis ZM4.</title>
        <authorList>
            <person name="Seo J.-S."/>
            <person name="Chong H."/>
            <person name="Park H.S."/>
            <person name="Yoon K.-O."/>
            <person name="Jung C."/>
            <person name="Kim J.J."/>
            <person name="Hong J.H."/>
            <person name="Kim H."/>
            <person name="Kim J.-H."/>
            <person name="Kil J.-I."/>
            <person name="Park C.J."/>
            <person name="Oh H.-M."/>
            <person name="Lee J.-S."/>
            <person name="Jin S.-J."/>
            <person name="Um H.-W."/>
            <person name="Lee H.-J."/>
            <person name="Oh S.-J."/>
            <person name="Kim J.Y."/>
            <person name="Kang H.L."/>
            <person name="Lee S.Y."/>
            <person name="Lee K.J."/>
            <person name="Kang H.S."/>
        </authorList>
    </citation>
    <scope>NUCLEOTIDE SEQUENCE [LARGE SCALE GENOMIC DNA]</scope>
    <source>
        <strain>ATCC 31821 / ZM4 / CP4</strain>
    </source>
</reference>
<gene>
    <name type="primary">frk</name>
    <name type="ordered locus">ZMO1719</name>
</gene>
<name>SCRK_ZYMMO</name>
<comment type="catalytic activity">
    <reaction>
        <text>D-fructose + ATP = D-fructose 6-phosphate + ADP + H(+)</text>
        <dbReference type="Rhea" id="RHEA:16125"/>
        <dbReference type="ChEBI" id="CHEBI:15378"/>
        <dbReference type="ChEBI" id="CHEBI:30616"/>
        <dbReference type="ChEBI" id="CHEBI:37721"/>
        <dbReference type="ChEBI" id="CHEBI:61527"/>
        <dbReference type="ChEBI" id="CHEBI:456216"/>
        <dbReference type="EC" id="2.7.1.4"/>
    </reaction>
</comment>
<comment type="cofactor">
    <cofactor evidence="2">
        <name>Mg(2+)</name>
        <dbReference type="ChEBI" id="CHEBI:18420"/>
    </cofactor>
</comment>
<comment type="activity regulation">
    <text evidence="2">Inhibition by zinc ions.</text>
</comment>
<comment type="similarity">
    <text evidence="2">Belongs to the ROK (NagC/XylR) family.</text>
</comment>
<proteinExistence type="inferred from homology"/>
<keyword id="KW-0067">ATP-binding</keyword>
<keyword id="KW-0119">Carbohydrate metabolism</keyword>
<keyword id="KW-0418">Kinase</keyword>
<keyword id="KW-0460">Magnesium</keyword>
<keyword id="KW-0479">Metal-binding</keyword>
<keyword id="KW-0547">Nucleotide-binding</keyword>
<keyword id="KW-1185">Reference proteome</keyword>
<keyword id="KW-0808">Transferase</keyword>
<keyword id="KW-0862">Zinc</keyword>
<evidence type="ECO:0000250" key="1"/>
<evidence type="ECO:0000305" key="2"/>